<evidence type="ECO:0000250" key="1">
    <source>
        <dbReference type="UniProtKB" id="P08263"/>
    </source>
</evidence>
<evidence type="ECO:0000250" key="2">
    <source>
        <dbReference type="UniProtKB" id="P13745"/>
    </source>
</evidence>
<evidence type="ECO:0000250" key="3">
    <source>
        <dbReference type="UniProtKB" id="P30115"/>
    </source>
</evidence>
<evidence type="ECO:0000250" key="4">
    <source>
        <dbReference type="UniProtKB" id="P30711"/>
    </source>
</evidence>
<evidence type="ECO:0000305" key="5"/>
<organism>
    <name type="scientific">Rattus norvegicus</name>
    <name type="common">Rat</name>
    <dbReference type="NCBI Taxonomy" id="10116"/>
    <lineage>
        <taxon>Eukaryota</taxon>
        <taxon>Metazoa</taxon>
        <taxon>Chordata</taxon>
        <taxon>Craniata</taxon>
        <taxon>Vertebrata</taxon>
        <taxon>Euteleostomi</taxon>
        <taxon>Mammalia</taxon>
        <taxon>Eutheria</taxon>
        <taxon>Euarchontoglires</taxon>
        <taxon>Glires</taxon>
        <taxon>Rodentia</taxon>
        <taxon>Myomorpha</taxon>
        <taxon>Muroidea</taxon>
        <taxon>Muridae</taxon>
        <taxon>Murinae</taxon>
        <taxon>Rattus</taxon>
    </lineage>
</organism>
<feature type="chain" id="PRO_0000185796" description="Glutathione S-transferase alpha-5">
    <location>
        <begin position="1"/>
        <end position="221"/>
    </location>
</feature>
<feature type="domain" description="GST N-terminal">
    <location>
        <begin position="3"/>
        <end position="83"/>
    </location>
</feature>
<feature type="domain" description="GST C-terminal">
    <location>
        <begin position="85"/>
        <end position="207"/>
    </location>
</feature>
<feature type="binding site" evidence="2">
    <location>
        <position position="9"/>
    </location>
    <ligand>
        <name>glutathione</name>
        <dbReference type="ChEBI" id="CHEBI:57925"/>
    </ligand>
</feature>
<feature type="binding site" evidence="1">
    <location>
        <position position="45"/>
    </location>
    <ligand>
        <name>glutathione</name>
        <dbReference type="ChEBI" id="CHEBI:57925"/>
    </ligand>
</feature>
<feature type="binding site" evidence="4">
    <location>
        <begin position="54"/>
        <end position="55"/>
    </location>
    <ligand>
        <name>glutathione</name>
        <dbReference type="ChEBI" id="CHEBI:57925"/>
    </ligand>
</feature>
<feature type="binding site" evidence="2">
    <location>
        <begin position="67"/>
        <end position="68"/>
    </location>
    <ligand>
        <name>glutathione</name>
        <dbReference type="ChEBI" id="CHEBI:57925"/>
    </ligand>
</feature>
<feature type="modified residue" description="N6-succinyllysine" evidence="3">
    <location>
        <position position="4"/>
    </location>
</feature>
<reference key="1">
    <citation type="journal article" date="1994" name="J. Biol. Chem.">
        <title>Cloning of cDNAs from fetal rat liver encoding glutathione S-transferase Yc polypeptides. The Yc2 subunit is expressed in adult rat liver resistant to the hepatocarcinogen aflatoxin B1.</title>
        <authorList>
            <person name="Hayes J.D."/>
            <person name="Nguyen T."/>
            <person name="Judah D.J."/>
            <person name="Petersson D.G."/>
            <person name="Neal G.E."/>
        </authorList>
    </citation>
    <scope>NUCLEOTIDE SEQUENCE [MRNA]</scope>
    <source>
        <strain>Fischer 344</strain>
        <tissue>Liver</tissue>
    </source>
</reference>
<reference key="2">
    <citation type="journal article" date="1996" name="Biochem. J.">
        <title>Characterization of the rat glutathione S-transferase Yc2 subunit gene, GSTA5: identification of a putative antioxidant-responsive element in the 5'-flanking region of rat GSTA5 that may mediate chemoprotection against aflatoxin B1.</title>
        <authorList>
            <person name="Pulford D.J."/>
            <person name="Hayes J.D."/>
        </authorList>
    </citation>
    <scope>NUCLEOTIDE SEQUENCE [MRNA]</scope>
</reference>
<reference key="3">
    <citation type="journal article" date="1991" name="Biochem. J.">
        <title>Ethoxyquin-induced resistance to aflatoxin B1 in the rat is associated with the expression of a novel alpha-class glutathione S-transferase subunit, Yc2, which possesses high catalytic activity for aflatoxin B1-8,9-epoxide.</title>
        <authorList>
            <person name="Hayes J.D."/>
            <person name="Judah D.J."/>
            <person name="McLellan L.I."/>
            <person name="Kerr L.A."/>
            <person name="Peacock S.D."/>
            <person name="Neal G.E."/>
        </authorList>
    </citation>
    <scope>PARTIAL PROTEIN SEQUENCE</scope>
    <source>
        <strain>Fischer 344</strain>
        <tissue>Liver</tissue>
    </source>
</reference>
<gene>
    <name type="primary">Gsta5</name>
    <name type="synonym">Gstyc2</name>
</gene>
<dbReference type="EC" id="2.5.1.18"/>
<dbReference type="EMBL" id="X78847">
    <property type="protein sequence ID" value="CAA55404.1"/>
    <property type="molecule type" value="mRNA"/>
</dbReference>
<dbReference type="EMBL" id="S72506">
    <property type="protein sequence ID" value="AAP21065.1"/>
    <property type="molecule type" value="mRNA"/>
</dbReference>
<dbReference type="EMBL" id="S82820">
    <property type="protein sequence ID" value="AAB46796.1"/>
    <property type="molecule type" value="mRNA"/>
</dbReference>
<dbReference type="PIR" id="A54858">
    <property type="entry name" value="A54858"/>
</dbReference>
<dbReference type="RefSeq" id="NP_001009920.1">
    <property type="nucleotide sequence ID" value="NM_001009920.2"/>
</dbReference>
<dbReference type="RefSeq" id="NP_001153211.1">
    <property type="nucleotide sequence ID" value="NM_001159739.2"/>
</dbReference>
<dbReference type="SMR" id="P46418"/>
<dbReference type="FunCoup" id="P46418">
    <property type="interactions" value="148"/>
</dbReference>
<dbReference type="STRING" id="10116.ENSRNOP00000068639"/>
<dbReference type="iPTMnet" id="P46418"/>
<dbReference type="PhosphoSitePlus" id="P46418"/>
<dbReference type="PaxDb" id="10116-ENSRNOP00000042770"/>
<dbReference type="Ensembl" id="ENSRNOT00000088416.2">
    <property type="protein sequence ID" value="ENSRNOP00000074697.2"/>
    <property type="gene ID" value="ENSRNOG00000056847.2"/>
</dbReference>
<dbReference type="GeneID" id="494500"/>
<dbReference type="KEGG" id="rno:494500"/>
<dbReference type="UCSC" id="RGD:2753">
    <property type="organism name" value="rat"/>
</dbReference>
<dbReference type="AGR" id="RGD:1591980"/>
<dbReference type="CTD" id="2940"/>
<dbReference type="RGD" id="1593189">
    <property type="gene designation" value="Gsta5"/>
</dbReference>
<dbReference type="eggNOG" id="KOG1695">
    <property type="taxonomic scope" value="Eukaryota"/>
</dbReference>
<dbReference type="GeneTree" id="ENSGT00940000163367"/>
<dbReference type="InParanoid" id="P46418"/>
<dbReference type="OMA" id="EEYFANM"/>
<dbReference type="OrthoDB" id="414243at2759"/>
<dbReference type="PhylomeDB" id="P46418"/>
<dbReference type="TreeFam" id="TF105321"/>
<dbReference type="Reactome" id="R-RNO-156590">
    <property type="pathway name" value="Glutathione conjugation"/>
</dbReference>
<dbReference type="Reactome" id="R-RNO-189483">
    <property type="pathway name" value="Heme degradation"/>
</dbReference>
<dbReference type="Reactome" id="R-RNO-9748787">
    <property type="pathway name" value="Azathioprine ADME"/>
</dbReference>
<dbReference type="PRO" id="PR:P46418"/>
<dbReference type="Proteomes" id="UP000002494">
    <property type="component" value="Chromosome 9"/>
</dbReference>
<dbReference type="GO" id="GO:0005829">
    <property type="term" value="C:cytosol"/>
    <property type="evidence" value="ECO:0000266"/>
    <property type="project" value="RGD"/>
</dbReference>
<dbReference type="GO" id="GO:0005739">
    <property type="term" value="C:mitochondrion"/>
    <property type="evidence" value="ECO:0000266"/>
    <property type="project" value="RGD"/>
</dbReference>
<dbReference type="GO" id="GO:0004364">
    <property type="term" value="F:glutathione transferase activity"/>
    <property type="evidence" value="ECO:0000266"/>
    <property type="project" value="RGD"/>
</dbReference>
<dbReference type="GO" id="GO:0006749">
    <property type="term" value="P:glutathione metabolic process"/>
    <property type="evidence" value="ECO:0000318"/>
    <property type="project" value="GO_Central"/>
</dbReference>
<dbReference type="GO" id="GO:0009617">
    <property type="term" value="P:response to bacterium"/>
    <property type="evidence" value="ECO:0000266"/>
    <property type="project" value="RGD"/>
</dbReference>
<dbReference type="GO" id="GO:0035634">
    <property type="term" value="P:response to stilbenoid"/>
    <property type="evidence" value="ECO:0000266"/>
    <property type="project" value="RGD"/>
</dbReference>
<dbReference type="GO" id="GO:0006805">
    <property type="term" value="P:xenobiotic metabolic process"/>
    <property type="evidence" value="ECO:0000318"/>
    <property type="project" value="GO_Central"/>
</dbReference>
<dbReference type="CDD" id="cd03208">
    <property type="entry name" value="GST_C_Alpha"/>
    <property type="match status" value="1"/>
</dbReference>
<dbReference type="CDD" id="cd03077">
    <property type="entry name" value="GST_N_Alpha"/>
    <property type="match status" value="1"/>
</dbReference>
<dbReference type="FunFam" id="1.20.1050.10:FF:000005">
    <property type="entry name" value="Glutathione S-transferase A1"/>
    <property type="match status" value="1"/>
</dbReference>
<dbReference type="Gene3D" id="1.20.1050.10">
    <property type="match status" value="1"/>
</dbReference>
<dbReference type="Gene3D" id="3.40.30.10">
    <property type="entry name" value="Glutaredoxin"/>
    <property type="match status" value="1"/>
</dbReference>
<dbReference type="InterPro" id="IPR010987">
    <property type="entry name" value="Glutathione-S-Trfase_C-like"/>
</dbReference>
<dbReference type="InterPro" id="IPR036282">
    <property type="entry name" value="Glutathione-S-Trfase_C_sf"/>
</dbReference>
<dbReference type="InterPro" id="IPR004045">
    <property type="entry name" value="Glutathione_S-Trfase_N"/>
</dbReference>
<dbReference type="InterPro" id="IPR003080">
    <property type="entry name" value="GST_alpha"/>
</dbReference>
<dbReference type="InterPro" id="IPR004046">
    <property type="entry name" value="GST_C"/>
</dbReference>
<dbReference type="InterPro" id="IPR050213">
    <property type="entry name" value="GST_superfamily"/>
</dbReference>
<dbReference type="InterPro" id="IPR036249">
    <property type="entry name" value="Thioredoxin-like_sf"/>
</dbReference>
<dbReference type="PANTHER" id="PTHR11571">
    <property type="entry name" value="GLUTATHIONE S-TRANSFERASE"/>
    <property type="match status" value="1"/>
</dbReference>
<dbReference type="PANTHER" id="PTHR11571:SF107">
    <property type="entry name" value="GLUTATHIONE S-TRANSFERASE A1"/>
    <property type="match status" value="1"/>
</dbReference>
<dbReference type="Pfam" id="PF00043">
    <property type="entry name" value="GST_C"/>
    <property type="match status" value="1"/>
</dbReference>
<dbReference type="Pfam" id="PF02798">
    <property type="entry name" value="GST_N"/>
    <property type="match status" value="1"/>
</dbReference>
<dbReference type="PRINTS" id="PR01266">
    <property type="entry name" value="GSTRNSFRASEA"/>
</dbReference>
<dbReference type="SFLD" id="SFLDG01205">
    <property type="entry name" value="AMPS.1"/>
    <property type="match status" value="1"/>
</dbReference>
<dbReference type="SFLD" id="SFLDG00363">
    <property type="entry name" value="AMPS_(cytGST):_Alpha-__Mu-__Pi"/>
    <property type="match status" value="1"/>
</dbReference>
<dbReference type="SUPFAM" id="SSF47616">
    <property type="entry name" value="GST C-terminal domain-like"/>
    <property type="match status" value="1"/>
</dbReference>
<dbReference type="SUPFAM" id="SSF52833">
    <property type="entry name" value="Thioredoxin-like"/>
    <property type="match status" value="1"/>
</dbReference>
<dbReference type="PROSITE" id="PS50405">
    <property type="entry name" value="GST_CTER"/>
    <property type="match status" value="1"/>
</dbReference>
<dbReference type="PROSITE" id="PS50404">
    <property type="entry name" value="GST_NTER"/>
    <property type="match status" value="1"/>
</dbReference>
<proteinExistence type="evidence at protein level"/>
<sequence length="221" mass="25347">MPGKPVLHYFDGRGRMEPIRWLLAAAGVEFEENFLKTRDDLARLRSDGSLMFEQVPMVEIDGMKLVQTKAILNYIATKYNLYGKDMKERALIDMYAEGVADLELMVLYYPYMPPGEKEASLAKIKDKARNRYFPAYEKVLKSHGQDYLVGNKLSRADVSLVELLYHVEEMDPGIVDNFPLLKALRTRVSNLPTVKKFLQPGSQRKPFDDEKCVESAKKIFS</sequence>
<protein>
    <recommendedName>
        <fullName>Glutathione S-transferase alpha-5</fullName>
        <ecNumber>2.5.1.18</ecNumber>
    </recommendedName>
    <alternativeName>
        <fullName>GST A5-5</fullName>
    </alternativeName>
    <alternativeName>
        <fullName>Glutathione S-transferase Yc-2</fullName>
        <shortName>GST Yc2</shortName>
    </alternativeName>
</protein>
<accession>P46418</accession>
<accession>Q6LD91</accession>
<name>GSTA5_RAT</name>
<comment type="function">
    <text>Conjugation of reduced glutathione to a wide number of exogenous and endogenous hydrophobic electrophiles. Has substantial activity toward aflatoxin B1-8,9-epoxide.</text>
</comment>
<comment type="catalytic activity">
    <reaction>
        <text>RX + glutathione = an S-substituted glutathione + a halide anion + H(+)</text>
        <dbReference type="Rhea" id="RHEA:16437"/>
        <dbReference type="ChEBI" id="CHEBI:15378"/>
        <dbReference type="ChEBI" id="CHEBI:16042"/>
        <dbReference type="ChEBI" id="CHEBI:17792"/>
        <dbReference type="ChEBI" id="CHEBI:57925"/>
        <dbReference type="ChEBI" id="CHEBI:90779"/>
        <dbReference type="EC" id="2.5.1.18"/>
    </reaction>
</comment>
<comment type="subunit">
    <text>Heterodimer of YC1 and YC2.</text>
</comment>
<comment type="subcellular location">
    <subcellularLocation>
        <location>Cytoplasm</location>
    </subcellularLocation>
</comment>
<comment type="tissue specificity">
    <text>Liver, nasal mucosa and epididymis.</text>
</comment>
<comment type="developmental stage">
    <text>Liver from adult female rats contains about 10-fold greater levels of YC2 than is found in liver from adult male rats.</text>
</comment>
<comment type="induction">
    <text>By ethoxyquin, oltipraz, butylated hydroxyanisole, and phenobarbitol.</text>
</comment>
<comment type="similarity">
    <text evidence="5">Belongs to the GST superfamily. Alpha family.</text>
</comment>
<keyword id="KW-0963">Cytoplasm</keyword>
<keyword id="KW-0903">Direct protein sequencing</keyword>
<keyword id="KW-1185">Reference proteome</keyword>
<keyword id="KW-0808">Transferase</keyword>